<feature type="chain" id="PRO_1000011787" description="GTPase Der">
    <location>
        <begin position="1"/>
        <end position="495"/>
    </location>
</feature>
<feature type="domain" description="EngA-type G 1">
    <location>
        <begin position="3"/>
        <end position="166"/>
    </location>
</feature>
<feature type="domain" description="EngA-type G 2">
    <location>
        <begin position="208"/>
        <end position="381"/>
    </location>
</feature>
<feature type="domain" description="KH-like" evidence="1">
    <location>
        <begin position="382"/>
        <end position="466"/>
    </location>
</feature>
<feature type="binding site" evidence="1">
    <location>
        <begin position="9"/>
        <end position="16"/>
    </location>
    <ligand>
        <name>GTP</name>
        <dbReference type="ChEBI" id="CHEBI:37565"/>
        <label>1</label>
    </ligand>
</feature>
<feature type="binding site" evidence="1">
    <location>
        <begin position="56"/>
        <end position="60"/>
    </location>
    <ligand>
        <name>GTP</name>
        <dbReference type="ChEBI" id="CHEBI:37565"/>
        <label>1</label>
    </ligand>
</feature>
<feature type="binding site" evidence="1">
    <location>
        <begin position="118"/>
        <end position="121"/>
    </location>
    <ligand>
        <name>GTP</name>
        <dbReference type="ChEBI" id="CHEBI:37565"/>
        <label>1</label>
    </ligand>
</feature>
<feature type="binding site" evidence="1">
    <location>
        <begin position="214"/>
        <end position="221"/>
    </location>
    <ligand>
        <name>GTP</name>
        <dbReference type="ChEBI" id="CHEBI:37565"/>
        <label>2</label>
    </ligand>
</feature>
<feature type="binding site" evidence="1">
    <location>
        <begin position="261"/>
        <end position="265"/>
    </location>
    <ligand>
        <name>GTP</name>
        <dbReference type="ChEBI" id="CHEBI:37565"/>
        <label>2</label>
    </ligand>
</feature>
<feature type="binding site" evidence="1">
    <location>
        <begin position="326"/>
        <end position="329"/>
    </location>
    <ligand>
        <name>GTP</name>
        <dbReference type="ChEBI" id="CHEBI:37565"/>
        <label>2</label>
    </ligand>
</feature>
<proteinExistence type="inferred from homology"/>
<protein>
    <recommendedName>
        <fullName evidence="1">GTPase Der</fullName>
    </recommendedName>
    <alternativeName>
        <fullName evidence="1">GTP-binding protein EngA</fullName>
    </alternativeName>
</protein>
<accession>Q1CK87</accession>
<accession>C4GRL5</accession>
<organism>
    <name type="scientific">Yersinia pestis bv. Antiqua (strain Nepal516)</name>
    <dbReference type="NCBI Taxonomy" id="377628"/>
    <lineage>
        <taxon>Bacteria</taxon>
        <taxon>Pseudomonadati</taxon>
        <taxon>Pseudomonadota</taxon>
        <taxon>Gammaproteobacteria</taxon>
        <taxon>Enterobacterales</taxon>
        <taxon>Yersiniaceae</taxon>
        <taxon>Yersinia</taxon>
    </lineage>
</organism>
<reference key="1">
    <citation type="journal article" date="2006" name="J. Bacteriol.">
        <title>Complete genome sequence of Yersinia pestis strains Antiqua and Nepal516: evidence of gene reduction in an emerging pathogen.</title>
        <authorList>
            <person name="Chain P.S.G."/>
            <person name="Hu P."/>
            <person name="Malfatti S.A."/>
            <person name="Radnedge L."/>
            <person name="Larimer F."/>
            <person name="Vergez L.M."/>
            <person name="Worsham P."/>
            <person name="Chu M.C."/>
            <person name="Andersen G.L."/>
        </authorList>
    </citation>
    <scope>NUCLEOTIDE SEQUENCE [LARGE SCALE GENOMIC DNA]</scope>
    <source>
        <strain>Nepal516</strain>
    </source>
</reference>
<reference key="2">
    <citation type="submission" date="2009-04" db="EMBL/GenBank/DDBJ databases">
        <title>Yersinia pestis Nepal516A whole genome shotgun sequencing project.</title>
        <authorList>
            <person name="Plunkett G. III"/>
            <person name="Anderson B.D."/>
            <person name="Baumler D.J."/>
            <person name="Burland V."/>
            <person name="Cabot E.L."/>
            <person name="Glasner J.D."/>
            <person name="Mau B."/>
            <person name="Neeno-Eckwall E."/>
            <person name="Perna N.T."/>
            <person name="Munk A.C."/>
            <person name="Tapia R."/>
            <person name="Green L.D."/>
            <person name="Rogers Y.C."/>
            <person name="Detter J.C."/>
            <person name="Bruce D.C."/>
            <person name="Brettin T.S."/>
        </authorList>
    </citation>
    <scope>NUCLEOTIDE SEQUENCE [LARGE SCALE GENOMIC DNA]</scope>
    <source>
        <strain>Nepal516</strain>
    </source>
</reference>
<evidence type="ECO:0000255" key="1">
    <source>
        <dbReference type="HAMAP-Rule" id="MF_00195"/>
    </source>
</evidence>
<sequence length="495" mass="55007">MIPVIALVGRPNVGKSTLFNRLTHTRDALVADFPGLTRDRKYGRAEVEGHEFIVVDTGGIDGTEDGVETKMAGQSLLAIEEADIVLFMVDARAGLMPADQGIAQHLRSREKATFLVANKTDGIDPDTATADFYSLGLGEVHAIAASHGRGVTQLIEDVMAPYMDAEEPEVELTEEEENAAYWAEQEAQGEDVPPEDPEDDFDPRTLPIKLAIVGRPNVGKSTLTNRILGEDRVVVYDMPGTTRDSIYIPMTRDDREYILIDTAGVRKRGKITETVEKFSVIKTLQAIEDSNVVLLVIDARDGISDQDLSLLGFILNSGRSLVIAVNKWDGMTEEARAQVKDMLDLRLGFVDFARIHFISALHGSGVGNLFESVQEAYDCSTKRVGTSLLTRIMQMAEEDHQPPLVRGRRVKLKYAHAGGYNPPIVVIHGNQVTDLSDSYKRYLMNYFRRSLKVMGTPIRIQFKEGENPFAGKRNPLTPNQMRKRKRLMSHLKKGK</sequence>
<comment type="function">
    <text evidence="1">GTPase that plays an essential role in the late steps of ribosome biogenesis.</text>
</comment>
<comment type="subunit">
    <text evidence="1">Associates with the 50S ribosomal subunit.</text>
</comment>
<comment type="similarity">
    <text evidence="1">Belongs to the TRAFAC class TrmE-Era-EngA-EngB-Septin-like GTPase superfamily. EngA (Der) GTPase family.</text>
</comment>
<name>DER_YERPN</name>
<gene>
    <name evidence="1" type="primary">der</name>
    <name type="synonym">engA</name>
    <name type="ordered locus">YPN_1263</name>
    <name type="ORF">YP516_1386</name>
</gene>
<keyword id="KW-0342">GTP-binding</keyword>
<keyword id="KW-0547">Nucleotide-binding</keyword>
<keyword id="KW-0677">Repeat</keyword>
<keyword id="KW-0690">Ribosome biogenesis</keyword>
<dbReference type="EMBL" id="CP000305">
    <property type="protein sequence ID" value="ABG17593.1"/>
    <property type="molecule type" value="Genomic_DNA"/>
</dbReference>
<dbReference type="EMBL" id="ACNQ01000008">
    <property type="protein sequence ID" value="EEO77706.1"/>
    <property type="molecule type" value="Genomic_DNA"/>
</dbReference>
<dbReference type="RefSeq" id="WP_002209813.1">
    <property type="nucleotide sequence ID" value="NZ_ACNQ01000008.1"/>
</dbReference>
<dbReference type="SMR" id="Q1CK87"/>
<dbReference type="GeneID" id="57975832"/>
<dbReference type="KEGG" id="ypn:YPN_1263"/>
<dbReference type="HOGENOM" id="CLU_016077_6_2_6"/>
<dbReference type="Proteomes" id="UP000008936">
    <property type="component" value="Chromosome"/>
</dbReference>
<dbReference type="GO" id="GO:0005525">
    <property type="term" value="F:GTP binding"/>
    <property type="evidence" value="ECO:0007669"/>
    <property type="project" value="UniProtKB-UniRule"/>
</dbReference>
<dbReference type="GO" id="GO:0043022">
    <property type="term" value="F:ribosome binding"/>
    <property type="evidence" value="ECO:0007669"/>
    <property type="project" value="TreeGrafter"/>
</dbReference>
<dbReference type="GO" id="GO:0042254">
    <property type="term" value="P:ribosome biogenesis"/>
    <property type="evidence" value="ECO:0007669"/>
    <property type="project" value="UniProtKB-KW"/>
</dbReference>
<dbReference type="CDD" id="cd01894">
    <property type="entry name" value="EngA1"/>
    <property type="match status" value="1"/>
</dbReference>
<dbReference type="CDD" id="cd01895">
    <property type="entry name" value="EngA2"/>
    <property type="match status" value="1"/>
</dbReference>
<dbReference type="FunFam" id="3.30.300.20:FF:000004">
    <property type="entry name" value="GTPase Der"/>
    <property type="match status" value="1"/>
</dbReference>
<dbReference type="FunFam" id="3.40.50.300:FF:000040">
    <property type="entry name" value="GTPase Der"/>
    <property type="match status" value="1"/>
</dbReference>
<dbReference type="FunFam" id="3.40.50.300:FF:000057">
    <property type="entry name" value="GTPase Der"/>
    <property type="match status" value="1"/>
</dbReference>
<dbReference type="Gene3D" id="3.30.300.20">
    <property type="match status" value="1"/>
</dbReference>
<dbReference type="Gene3D" id="3.40.50.300">
    <property type="entry name" value="P-loop containing nucleotide triphosphate hydrolases"/>
    <property type="match status" value="2"/>
</dbReference>
<dbReference type="HAMAP" id="MF_00195">
    <property type="entry name" value="GTPase_Der"/>
    <property type="match status" value="1"/>
</dbReference>
<dbReference type="InterPro" id="IPR031166">
    <property type="entry name" value="G_ENGA"/>
</dbReference>
<dbReference type="InterPro" id="IPR006073">
    <property type="entry name" value="GTP-bd"/>
</dbReference>
<dbReference type="InterPro" id="IPR016484">
    <property type="entry name" value="GTPase_Der"/>
</dbReference>
<dbReference type="InterPro" id="IPR032859">
    <property type="entry name" value="KH_dom-like"/>
</dbReference>
<dbReference type="InterPro" id="IPR015946">
    <property type="entry name" value="KH_dom-like_a/b"/>
</dbReference>
<dbReference type="InterPro" id="IPR027417">
    <property type="entry name" value="P-loop_NTPase"/>
</dbReference>
<dbReference type="InterPro" id="IPR005225">
    <property type="entry name" value="Small_GTP-bd"/>
</dbReference>
<dbReference type="NCBIfam" id="TIGR03594">
    <property type="entry name" value="GTPase_EngA"/>
    <property type="match status" value="1"/>
</dbReference>
<dbReference type="NCBIfam" id="TIGR00231">
    <property type="entry name" value="small_GTP"/>
    <property type="match status" value="2"/>
</dbReference>
<dbReference type="PANTHER" id="PTHR43834">
    <property type="entry name" value="GTPASE DER"/>
    <property type="match status" value="1"/>
</dbReference>
<dbReference type="PANTHER" id="PTHR43834:SF6">
    <property type="entry name" value="GTPASE DER"/>
    <property type="match status" value="1"/>
</dbReference>
<dbReference type="Pfam" id="PF14714">
    <property type="entry name" value="KH_dom-like"/>
    <property type="match status" value="1"/>
</dbReference>
<dbReference type="Pfam" id="PF01926">
    <property type="entry name" value="MMR_HSR1"/>
    <property type="match status" value="2"/>
</dbReference>
<dbReference type="PIRSF" id="PIRSF006485">
    <property type="entry name" value="GTP-binding_EngA"/>
    <property type="match status" value="1"/>
</dbReference>
<dbReference type="PRINTS" id="PR00326">
    <property type="entry name" value="GTP1OBG"/>
</dbReference>
<dbReference type="SUPFAM" id="SSF52540">
    <property type="entry name" value="P-loop containing nucleoside triphosphate hydrolases"/>
    <property type="match status" value="2"/>
</dbReference>
<dbReference type="PROSITE" id="PS51712">
    <property type="entry name" value="G_ENGA"/>
    <property type="match status" value="2"/>
</dbReference>